<comment type="function">
    <text evidence="1">Part of the ABC transporter DppBCDF involved in dipeptide transport. Responsible for the translocation of the substrate across the membrane.</text>
</comment>
<comment type="subcellular location">
    <subcellularLocation>
        <location evidence="3">Cell inner membrane</location>
        <topology evidence="2">Multi-pass membrane protein</topology>
    </subcellularLocation>
</comment>
<comment type="similarity">
    <text evidence="3">Belongs to the binding-protein-dependent transport system permease family. OppBC subfamily.</text>
</comment>
<name>DPPC_HAEIN</name>
<evidence type="ECO:0000250" key="1">
    <source>
        <dbReference type="UniProtKB" id="P0AEG1"/>
    </source>
</evidence>
<evidence type="ECO:0000255" key="2">
    <source>
        <dbReference type="PROSITE-ProRule" id="PRU00441"/>
    </source>
</evidence>
<evidence type="ECO:0000305" key="3"/>
<gene>
    <name type="primary">dppC</name>
    <name type="ordered locus">HI_1186</name>
</gene>
<keyword id="KW-0997">Cell inner membrane</keyword>
<keyword id="KW-1003">Cell membrane</keyword>
<keyword id="KW-0472">Membrane</keyword>
<keyword id="KW-0571">Peptide transport</keyword>
<keyword id="KW-0653">Protein transport</keyword>
<keyword id="KW-1185">Reference proteome</keyword>
<keyword id="KW-0812">Transmembrane</keyword>
<keyword id="KW-1133">Transmembrane helix</keyword>
<keyword id="KW-0813">Transport</keyword>
<proteinExistence type="inferred from homology"/>
<dbReference type="EMBL" id="L42023">
    <property type="protein sequence ID" value="AAC22839.1"/>
    <property type="molecule type" value="Genomic_DNA"/>
</dbReference>
<dbReference type="EMBL" id="U17295">
    <property type="protein sequence ID" value="AAA95973.1"/>
    <property type="molecule type" value="Genomic_DNA"/>
</dbReference>
<dbReference type="RefSeq" id="NP_439342.1">
    <property type="nucleotide sequence ID" value="NC_000907.1"/>
</dbReference>
<dbReference type="SMR" id="P51000"/>
<dbReference type="STRING" id="71421.HI_1186"/>
<dbReference type="TCDB" id="3.A.1.5.27">
    <property type="family name" value="the atp-binding cassette (abc) superfamily"/>
</dbReference>
<dbReference type="EnsemblBacteria" id="AAC22839">
    <property type="protein sequence ID" value="AAC22839"/>
    <property type="gene ID" value="HI_1186"/>
</dbReference>
<dbReference type="KEGG" id="hin:HI_1186"/>
<dbReference type="PATRIC" id="fig|71421.8.peg.1237"/>
<dbReference type="eggNOG" id="COG1173">
    <property type="taxonomic scope" value="Bacteria"/>
</dbReference>
<dbReference type="HOGENOM" id="CLU_028518_1_1_6"/>
<dbReference type="OrthoDB" id="9805884at2"/>
<dbReference type="PhylomeDB" id="P51000"/>
<dbReference type="BioCyc" id="HINF71421:G1GJ1-1217-MONOMER"/>
<dbReference type="Proteomes" id="UP000000579">
    <property type="component" value="Chromosome"/>
</dbReference>
<dbReference type="GO" id="GO:0005886">
    <property type="term" value="C:plasma membrane"/>
    <property type="evidence" value="ECO:0000318"/>
    <property type="project" value="GO_Central"/>
</dbReference>
<dbReference type="GO" id="GO:0071916">
    <property type="term" value="F:dipeptide transmembrane transporter activity"/>
    <property type="evidence" value="ECO:0000318"/>
    <property type="project" value="GO_Central"/>
</dbReference>
<dbReference type="GO" id="GO:0015031">
    <property type="term" value="P:protein transport"/>
    <property type="evidence" value="ECO:0007669"/>
    <property type="project" value="UniProtKB-KW"/>
</dbReference>
<dbReference type="CDD" id="cd06261">
    <property type="entry name" value="TM_PBP2"/>
    <property type="match status" value="1"/>
</dbReference>
<dbReference type="FunFam" id="1.10.3720.10:FF:000007">
    <property type="entry name" value="Dipeptide ABC transporter permease DppC"/>
    <property type="match status" value="1"/>
</dbReference>
<dbReference type="Gene3D" id="1.10.3720.10">
    <property type="entry name" value="MetI-like"/>
    <property type="match status" value="1"/>
</dbReference>
<dbReference type="InterPro" id="IPR050366">
    <property type="entry name" value="BP-dependent_transpt_permease"/>
</dbReference>
<dbReference type="InterPro" id="IPR000515">
    <property type="entry name" value="MetI-like"/>
</dbReference>
<dbReference type="InterPro" id="IPR035906">
    <property type="entry name" value="MetI-like_sf"/>
</dbReference>
<dbReference type="InterPro" id="IPR025966">
    <property type="entry name" value="OppC_N"/>
</dbReference>
<dbReference type="PANTHER" id="PTHR43386:SF1">
    <property type="entry name" value="D,D-DIPEPTIDE TRANSPORT SYSTEM PERMEASE PROTEIN DDPC-RELATED"/>
    <property type="match status" value="1"/>
</dbReference>
<dbReference type="PANTHER" id="PTHR43386">
    <property type="entry name" value="OLIGOPEPTIDE TRANSPORT SYSTEM PERMEASE PROTEIN APPC"/>
    <property type="match status" value="1"/>
</dbReference>
<dbReference type="Pfam" id="PF00528">
    <property type="entry name" value="BPD_transp_1"/>
    <property type="match status" value="1"/>
</dbReference>
<dbReference type="Pfam" id="PF12911">
    <property type="entry name" value="OppC_N"/>
    <property type="match status" value="1"/>
</dbReference>
<dbReference type="SUPFAM" id="SSF161098">
    <property type="entry name" value="MetI-like"/>
    <property type="match status" value="1"/>
</dbReference>
<dbReference type="PROSITE" id="PS50928">
    <property type="entry name" value="ABC_TM1"/>
    <property type="match status" value="1"/>
</dbReference>
<sequence length="295" mass="31840">MSDTPLTFAPKTPLQEFWFYFKQNRGALIGLIFILIVALISILAPYIAPFDPTEQNRTALLLPPAWYEGGNPAYLLGTDDIGRDILSRIIYGTRISVFAGFIIVLLSCAFGTSLGLISGYYGGVLDTIIIRLIDIMLAIPNLLLTIVVVSILEPSLANATLAIAVVSIPSYVRLTRAAMMNEKNRDYVTSSKVAGAGILRLMFIVILPNCLAPLIVQMTMGISNAILELATLGFLGIGAKPPTPELGTMLSEARGFMQAANWLVTIPGLVILSLVLAFNLMGDGLRDALDPKLKQ</sequence>
<organism>
    <name type="scientific">Haemophilus influenzae (strain ATCC 51907 / DSM 11121 / KW20 / Rd)</name>
    <dbReference type="NCBI Taxonomy" id="71421"/>
    <lineage>
        <taxon>Bacteria</taxon>
        <taxon>Pseudomonadati</taxon>
        <taxon>Pseudomonadota</taxon>
        <taxon>Gammaproteobacteria</taxon>
        <taxon>Pasteurellales</taxon>
        <taxon>Pasteurellaceae</taxon>
        <taxon>Haemophilus</taxon>
    </lineage>
</organism>
<reference key="1">
    <citation type="journal article" date="1995" name="Science">
        <title>Whole-genome random sequencing and assembly of Haemophilus influenzae Rd.</title>
        <authorList>
            <person name="Fleischmann R.D."/>
            <person name="Adams M.D."/>
            <person name="White O."/>
            <person name="Clayton R.A."/>
            <person name="Kirkness E.F."/>
            <person name="Kerlavage A.R."/>
            <person name="Bult C.J."/>
            <person name="Tomb J.-F."/>
            <person name="Dougherty B.A."/>
            <person name="Merrick J.M."/>
            <person name="McKenney K."/>
            <person name="Sutton G.G."/>
            <person name="FitzHugh W."/>
            <person name="Fields C.A."/>
            <person name="Gocayne J.D."/>
            <person name="Scott J.D."/>
            <person name="Shirley R."/>
            <person name="Liu L.-I."/>
            <person name="Glodek A."/>
            <person name="Kelley J.M."/>
            <person name="Weidman J.F."/>
            <person name="Phillips C.A."/>
            <person name="Spriggs T."/>
            <person name="Hedblom E."/>
            <person name="Cotton M.D."/>
            <person name="Utterback T.R."/>
            <person name="Hanna M.C."/>
            <person name="Nguyen D.T."/>
            <person name="Saudek D.M."/>
            <person name="Brandon R.C."/>
            <person name="Fine L.D."/>
            <person name="Fritchman J.L."/>
            <person name="Fuhrmann J.L."/>
            <person name="Geoghagen N.S.M."/>
            <person name="Gnehm C.L."/>
            <person name="McDonald L.A."/>
            <person name="Small K.V."/>
            <person name="Fraser C.M."/>
            <person name="Smith H.O."/>
            <person name="Venter J.C."/>
        </authorList>
    </citation>
    <scope>NUCLEOTIDE SEQUENCE [LARGE SCALE GENOMIC DNA]</scope>
    <source>
        <strain>ATCC 51907 / DSM 11121 / KW20 / Rd</strain>
    </source>
</reference>
<reference key="2">
    <citation type="journal article" date="1996" name="J. Bacteriol.">
        <title>Altered lipopolysaccharide characteristic of the I69 phenotype in Haemophilus influenzae results from mutations in a novel gene, isn.</title>
        <authorList>
            <person name="Preston A."/>
            <person name="Maskell D."/>
            <person name="Johnson A."/>
            <person name="Moxon E.R."/>
        </authorList>
    </citation>
    <scope>NUCLEOTIDE SEQUENCE [GENOMIC DNA]</scope>
    <source>
        <strain>ATCC 51907 / DSM 11121 / KW20 / Rd</strain>
    </source>
</reference>
<protein>
    <recommendedName>
        <fullName evidence="1">Dipeptide transport system permease protein DppC</fullName>
    </recommendedName>
</protein>
<accession>P51000</accession>
<feature type="chain" id="PRO_0000060012" description="Dipeptide transport system permease protein DppC">
    <location>
        <begin position="1"/>
        <end position="295"/>
    </location>
</feature>
<feature type="transmembrane region" description="Helical" evidence="2">
    <location>
        <begin position="27"/>
        <end position="47"/>
    </location>
</feature>
<feature type="transmembrane region" description="Helical" evidence="2">
    <location>
        <begin position="97"/>
        <end position="117"/>
    </location>
</feature>
<feature type="transmembrane region" description="Helical" evidence="2">
    <location>
        <begin position="132"/>
        <end position="152"/>
    </location>
</feature>
<feature type="transmembrane region" description="Helical" evidence="2">
    <location>
        <begin position="156"/>
        <end position="178"/>
    </location>
</feature>
<feature type="transmembrane region" description="Helical" evidence="2">
    <location>
        <begin position="202"/>
        <end position="222"/>
    </location>
</feature>
<feature type="transmembrane region" description="Helical" evidence="2">
    <location>
        <begin position="226"/>
        <end position="246"/>
    </location>
</feature>
<feature type="transmembrane region" description="Helical" evidence="2">
    <location>
        <begin position="262"/>
        <end position="282"/>
    </location>
</feature>
<feature type="domain" description="ABC transmembrane type-1" evidence="2">
    <location>
        <begin position="93"/>
        <end position="282"/>
    </location>
</feature>